<gene>
    <name evidence="1" type="primary">recA</name>
    <name type="ordered locus">SAS1219</name>
</gene>
<sequence length="347" mass="37657">MDNDRQKALDTVIKNMEKSFGKGAVMKLGDNIGRRVSTTSTGSVTLDNALGVGGYPKGRIIEIYGPESSGKTTVALHAIAEVQSNGGVAAFIDAEHALDPEYAQALGVDIDNLYLSQPDHGEQGLEIAEAFVRSGAVDIVVVDSVAALTPKAEIEGEMGDTHVGLQARLMSQALRKLSGAISKSNTTAIFINQIREKVGVMFGNPETTPGGRALKFYSSVRLEVRRAEQLKQGQEIVGNRTKIKVVKNKVAPPFRVAEVDIMYGQGISKEGELIDLGVENDIVDKSGAWYSYNGERMGQGKENVKMYLKENPQIKEEIDRKLREKLGISDGDVEETEDAPKSLFDEE</sequence>
<comment type="function">
    <text evidence="1">Can catalyze the hydrolysis of ATP in the presence of single-stranded DNA, the ATP-dependent uptake of single-stranded DNA by duplex DNA, and the ATP-dependent hybridization of homologous single-stranded DNAs. It interacts with LexA causing its activation and leading to its autocatalytic cleavage.</text>
</comment>
<comment type="subcellular location">
    <subcellularLocation>
        <location evidence="1">Cytoplasm</location>
    </subcellularLocation>
</comment>
<comment type="similarity">
    <text evidence="1">Belongs to the RecA family.</text>
</comment>
<dbReference type="EMBL" id="BX571857">
    <property type="protein sequence ID" value="CAG42996.1"/>
    <property type="molecule type" value="Genomic_DNA"/>
</dbReference>
<dbReference type="RefSeq" id="WP_000368166.1">
    <property type="nucleotide sequence ID" value="NC_002953.3"/>
</dbReference>
<dbReference type="SMR" id="Q6G9S8"/>
<dbReference type="KEGG" id="sas:SAS1219"/>
<dbReference type="HOGENOM" id="CLU_040469_1_2_9"/>
<dbReference type="GO" id="GO:0005829">
    <property type="term" value="C:cytosol"/>
    <property type="evidence" value="ECO:0007669"/>
    <property type="project" value="TreeGrafter"/>
</dbReference>
<dbReference type="GO" id="GO:0005524">
    <property type="term" value="F:ATP binding"/>
    <property type="evidence" value="ECO:0007669"/>
    <property type="project" value="UniProtKB-UniRule"/>
</dbReference>
<dbReference type="GO" id="GO:0016887">
    <property type="term" value="F:ATP hydrolysis activity"/>
    <property type="evidence" value="ECO:0007669"/>
    <property type="project" value="InterPro"/>
</dbReference>
<dbReference type="GO" id="GO:0140664">
    <property type="term" value="F:ATP-dependent DNA damage sensor activity"/>
    <property type="evidence" value="ECO:0007669"/>
    <property type="project" value="InterPro"/>
</dbReference>
<dbReference type="GO" id="GO:0003684">
    <property type="term" value="F:damaged DNA binding"/>
    <property type="evidence" value="ECO:0007669"/>
    <property type="project" value="UniProtKB-UniRule"/>
</dbReference>
<dbReference type="GO" id="GO:0003697">
    <property type="term" value="F:single-stranded DNA binding"/>
    <property type="evidence" value="ECO:0007669"/>
    <property type="project" value="UniProtKB-UniRule"/>
</dbReference>
<dbReference type="GO" id="GO:0006310">
    <property type="term" value="P:DNA recombination"/>
    <property type="evidence" value="ECO:0007669"/>
    <property type="project" value="UniProtKB-UniRule"/>
</dbReference>
<dbReference type="GO" id="GO:0006281">
    <property type="term" value="P:DNA repair"/>
    <property type="evidence" value="ECO:0007669"/>
    <property type="project" value="UniProtKB-UniRule"/>
</dbReference>
<dbReference type="GO" id="GO:0009432">
    <property type="term" value="P:SOS response"/>
    <property type="evidence" value="ECO:0007669"/>
    <property type="project" value="UniProtKB-UniRule"/>
</dbReference>
<dbReference type="CDD" id="cd00983">
    <property type="entry name" value="RecA"/>
    <property type="match status" value="1"/>
</dbReference>
<dbReference type="FunFam" id="3.40.50.300:FF:000087">
    <property type="entry name" value="Recombinase RecA"/>
    <property type="match status" value="1"/>
</dbReference>
<dbReference type="Gene3D" id="3.40.50.300">
    <property type="entry name" value="P-loop containing nucleotide triphosphate hydrolases"/>
    <property type="match status" value="1"/>
</dbReference>
<dbReference type="HAMAP" id="MF_00268">
    <property type="entry name" value="RecA"/>
    <property type="match status" value="1"/>
</dbReference>
<dbReference type="InterPro" id="IPR003593">
    <property type="entry name" value="AAA+_ATPase"/>
</dbReference>
<dbReference type="InterPro" id="IPR013765">
    <property type="entry name" value="DNA_recomb/repair_RecA"/>
</dbReference>
<dbReference type="InterPro" id="IPR020584">
    <property type="entry name" value="DNA_recomb/repair_RecA_CS"/>
</dbReference>
<dbReference type="InterPro" id="IPR027417">
    <property type="entry name" value="P-loop_NTPase"/>
</dbReference>
<dbReference type="InterPro" id="IPR049261">
    <property type="entry name" value="RecA-like_C"/>
</dbReference>
<dbReference type="InterPro" id="IPR049428">
    <property type="entry name" value="RecA-like_N"/>
</dbReference>
<dbReference type="InterPro" id="IPR020588">
    <property type="entry name" value="RecA_ATP-bd"/>
</dbReference>
<dbReference type="InterPro" id="IPR023400">
    <property type="entry name" value="RecA_C_sf"/>
</dbReference>
<dbReference type="InterPro" id="IPR020587">
    <property type="entry name" value="RecA_monomer-monomer_interface"/>
</dbReference>
<dbReference type="NCBIfam" id="TIGR02012">
    <property type="entry name" value="tigrfam_recA"/>
    <property type="match status" value="1"/>
</dbReference>
<dbReference type="PANTHER" id="PTHR45900:SF1">
    <property type="entry name" value="MITOCHONDRIAL DNA REPAIR PROTEIN RECA HOMOLOG-RELATED"/>
    <property type="match status" value="1"/>
</dbReference>
<dbReference type="PANTHER" id="PTHR45900">
    <property type="entry name" value="RECA"/>
    <property type="match status" value="1"/>
</dbReference>
<dbReference type="Pfam" id="PF00154">
    <property type="entry name" value="RecA"/>
    <property type="match status" value="1"/>
</dbReference>
<dbReference type="Pfam" id="PF21096">
    <property type="entry name" value="RecA_C"/>
    <property type="match status" value="1"/>
</dbReference>
<dbReference type="PRINTS" id="PR00142">
    <property type="entry name" value="RECA"/>
</dbReference>
<dbReference type="SMART" id="SM00382">
    <property type="entry name" value="AAA"/>
    <property type="match status" value="1"/>
</dbReference>
<dbReference type="SUPFAM" id="SSF52540">
    <property type="entry name" value="P-loop containing nucleoside triphosphate hydrolases"/>
    <property type="match status" value="1"/>
</dbReference>
<dbReference type="SUPFAM" id="SSF54752">
    <property type="entry name" value="RecA protein, C-terminal domain"/>
    <property type="match status" value="1"/>
</dbReference>
<dbReference type="PROSITE" id="PS00321">
    <property type="entry name" value="RECA_1"/>
    <property type="match status" value="1"/>
</dbReference>
<dbReference type="PROSITE" id="PS50162">
    <property type="entry name" value="RECA_2"/>
    <property type="match status" value="1"/>
</dbReference>
<dbReference type="PROSITE" id="PS50163">
    <property type="entry name" value="RECA_3"/>
    <property type="match status" value="1"/>
</dbReference>
<accession>Q6G9S8</accession>
<name>RECA_STAAS</name>
<proteinExistence type="inferred from homology"/>
<reference key="1">
    <citation type="journal article" date="2004" name="Proc. Natl. Acad. Sci. U.S.A.">
        <title>Complete genomes of two clinical Staphylococcus aureus strains: evidence for the rapid evolution of virulence and drug resistance.</title>
        <authorList>
            <person name="Holden M.T.G."/>
            <person name="Feil E.J."/>
            <person name="Lindsay J.A."/>
            <person name="Peacock S.J."/>
            <person name="Day N.P.J."/>
            <person name="Enright M.C."/>
            <person name="Foster T.J."/>
            <person name="Moore C.E."/>
            <person name="Hurst L."/>
            <person name="Atkin R."/>
            <person name="Barron A."/>
            <person name="Bason N."/>
            <person name="Bentley S.D."/>
            <person name="Chillingworth C."/>
            <person name="Chillingworth T."/>
            <person name="Churcher C."/>
            <person name="Clark L."/>
            <person name="Corton C."/>
            <person name="Cronin A."/>
            <person name="Doggett J."/>
            <person name="Dowd L."/>
            <person name="Feltwell T."/>
            <person name="Hance Z."/>
            <person name="Harris B."/>
            <person name="Hauser H."/>
            <person name="Holroyd S."/>
            <person name="Jagels K."/>
            <person name="James K.D."/>
            <person name="Lennard N."/>
            <person name="Line A."/>
            <person name="Mayes R."/>
            <person name="Moule S."/>
            <person name="Mungall K."/>
            <person name="Ormond D."/>
            <person name="Quail M.A."/>
            <person name="Rabbinowitsch E."/>
            <person name="Rutherford K.M."/>
            <person name="Sanders M."/>
            <person name="Sharp S."/>
            <person name="Simmonds M."/>
            <person name="Stevens K."/>
            <person name="Whitehead S."/>
            <person name="Barrell B.G."/>
            <person name="Spratt B.G."/>
            <person name="Parkhill J."/>
        </authorList>
    </citation>
    <scope>NUCLEOTIDE SEQUENCE [LARGE SCALE GENOMIC DNA]</scope>
    <source>
        <strain>MSSA476</strain>
    </source>
</reference>
<feature type="chain" id="PRO_0000122842" description="Protein RecA">
    <location>
        <begin position="1"/>
        <end position="347"/>
    </location>
</feature>
<feature type="region of interest" description="Disordered" evidence="2">
    <location>
        <begin position="325"/>
        <end position="347"/>
    </location>
</feature>
<feature type="compositionally biased region" description="Basic and acidic residues" evidence="2">
    <location>
        <begin position="338"/>
        <end position="347"/>
    </location>
</feature>
<feature type="binding site" evidence="1">
    <location>
        <begin position="65"/>
        <end position="72"/>
    </location>
    <ligand>
        <name>ATP</name>
        <dbReference type="ChEBI" id="CHEBI:30616"/>
    </ligand>
</feature>
<organism>
    <name type="scientific">Staphylococcus aureus (strain MSSA476)</name>
    <dbReference type="NCBI Taxonomy" id="282459"/>
    <lineage>
        <taxon>Bacteria</taxon>
        <taxon>Bacillati</taxon>
        <taxon>Bacillota</taxon>
        <taxon>Bacilli</taxon>
        <taxon>Bacillales</taxon>
        <taxon>Staphylococcaceae</taxon>
        <taxon>Staphylococcus</taxon>
    </lineage>
</organism>
<evidence type="ECO:0000255" key="1">
    <source>
        <dbReference type="HAMAP-Rule" id="MF_00268"/>
    </source>
</evidence>
<evidence type="ECO:0000256" key="2">
    <source>
        <dbReference type="SAM" id="MobiDB-lite"/>
    </source>
</evidence>
<keyword id="KW-0067">ATP-binding</keyword>
<keyword id="KW-0963">Cytoplasm</keyword>
<keyword id="KW-0227">DNA damage</keyword>
<keyword id="KW-0233">DNA recombination</keyword>
<keyword id="KW-0234">DNA repair</keyword>
<keyword id="KW-0238">DNA-binding</keyword>
<keyword id="KW-0547">Nucleotide-binding</keyword>
<keyword id="KW-0742">SOS response</keyword>
<protein>
    <recommendedName>
        <fullName evidence="1">Protein RecA</fullName>
    </recommendedName>
    <alternativeName>
        <fullName evidence="1">Recombinase A</fullName>
    </alternativeName>
</protein>